<evidence type="ECO:0000269" key="1">
    <source>
    </source>
</evidence>
<evidence type="ECO:0000269" key="2">
    <source>
    </source>
</evidence>
<evidence type="ECO:0000305" key="3"/>
<evidence type="ECO:0007829" key="4">
    <source>
        <dbReference type="PDB" id="2D1P"/>
    </source>
</evidence>
<accession>P45532</accession>
<accession>Q2M710</accession>
<gene>
    <name type="primary">tusD</name>
    <name type="synonym">yheN</name>
    <name type="ordered locus">b3345</name>
    <name type="ordered locus">JW3307</name>
</gene>
<name>TUSD_ECOLI</name>
<comment type="function">
    <text evidence="1">Part of a sulfur-relay system required for 2-thiolation of 5-methylaminomethyl-2-thiouridine (mnm(5)s(2)U) at tRNA wobble positions. Accepts sulfur from TusA and transfers it in turn to TusE.</text>
</comment>
<comment type="subunit">
    <text evidence="1 2">Heterohexamer, formed by a dimer of trimers. The hexameric TusBCD complex contains 2 copies each of TusB, TusC and TusD. The TusBCD complex interacts with TusE.</text>
</comment>
<comment type="subcellular location">
    <subcellularLocation>
        <location evidence="3">Cytoplasm</location>
    </subcellularLocation>
</comment>
<comment type="similarity">
    <text evidence="3">Belongs to the DsrE/TusD family.</text>
</comment>
<reference key="1">
    <citation type="journal article" date="1997" name="Science">
        <title>The complete genome sequence of Escherichia coli K-12.</title>
        <authorList>
            <person name="Blattner F.R."/>
            <person name="Plunkett G. III"/>
            <person name="Bloch C.A."/>
            <person name="Perna N.T."/>
            <person name="Burland V."/>
            <person name="Riley M."/>
            <person name="Collado-Vides J."/>
            <person name="Glasner J.D."/>
            <person name="Rode C.K."/>
            <person name="Mayhew G.F."/>
            <person name="Gregor J."/>
            <person name="Davis N.W."/>
            <person name="Kirkpatrick H.A."/>
            <person name="Goeden M.A."/>
            <person name="Rose D.J."/>
            <person name="Mau B."/>
            <person name="Shao Y."/>
        </authorList>
    </citation>
    <scope>NUCLEOTIDE SEQUENCE [LARGE SCALE GENOMIC DNA]</scope>
    <source>
        <strain>K12 / MG1655 / ATCC 47076</strain>
    </source>
</reference>
<reference key="2">
    <citation type="journal article" date="2006" name="Mol. Syst. Biol.">
        <title>Highly accurate genome sequences of Escherichia coli K-12 strains MG1655 and W3110.</title>
        <authorList>
            <person name="Hayashi K."/>
            <person name="Morooka N."/>
            <person name="Yamamoto Y."/>
            <person name="Fujita K."/>
            <person name="Isono K."/>
            <person name="Choi S."/>
            <person name="Ohtsubo E."/>
            <person name="Baba T."/>
            <person name="Wanner B.L."/>
            <person name="Mori H."/>
            <person name="Horiuchi T."/>
        </authorList>
    </citation>
    <scope>NUCLEOTIDE SEQUENCE [LARGE SCALE GENOMIC DNA]</scope>
    <source>
        <strain>K12 / W3110 / ATCC 27325 / DSM 5911</strain>
    </source>
</reference>
<reference key="3">
    <citation type="journal article" date="2006" name="Mol. Cell">
        <title>Mechanistic insights into sulfur relay by multiple sulfur mediators involved in thiouridine biosynthesis at tRNA wobble positions.</title>
        <authorList>
            <person name="Ikeuchi Y."/>
            <person name="Shigi N."/>
            <person name="Kato J."/>
            <person name="Nishimura A."/>
            <person name="Suzuki T."/>
        </authorList>
    </citation>
    <scope>FUNCTION</scope>
    <scope>MUTAGENESIS OF CYS-78</scope>
    <scope>SUBUNIT</scope>
</reference>
<reference key="4">
    <citation type="journal article" date="2006" name="Structure">
        <title>Structural basis for sulfur relay to RNA mediated by heterohexameric TusBCD complex.</title>
        <authorList>
            <person name="Numata T."/>
            <person name="Fukai S."/>
            <person name="Ikeuchi Y."/>
            <person name="Suzuki T."/>
            <person name="Nureki O."/>
        </authorList>
    </citation>
    <scope>X-RAY CRYSTALLOGRAPHY (2.15 ANGSTROMS)</scope>
    <scope>MUTAGENESIS OF CYS-78 AND CYS-122</scope>
    <scope>SUBUNIT</scope>
</reference>
<sequence length="128" mass="13641">MRFAIVVTGPAYGTQQASSAFQFAQALIADGHELSSVFFYREGVYNANQLTSPASDEFDLVRAWQQLNAQHGVALNICVAAALRRGVVDETEAGRLGLASSNLQQGFTLSGLGALAEASLTCDRVVQF</sequence>
<organism>
    <name type="scientific">Escherichia coli (strain K12)</name>
    <dbReference type="NCBI Taxonomy" id="83333"/>
    <lineage>
        <taxon>Bacteria</taxon>
        <taxon>Pseudomonadati</taxon>
        <taxon>Pseudomonadota</taxon>
        <taxon>Gammaproteobacteria</taxon>
        <taxon>Enterobacterales</taxon>
        <taxon>Enterobacteriaceae</taxon>
        <taxon>Escherichia</taxon>
    </lineage>
</organism>
<proteinExistence type="evidence at protein level"/>
<feature type="chain" id="PRO_0000214724" description="Sulfurtransferase TusD">
    <location>
        <begin position="1"/>
        <end position="128"/>
    </location>
</feature>
<feature type="active site" description="Cysteine persulfide intermediate">
    <location>
        <position position="78"/>
    </location>
</feature>
<feature type="mutagenesis site" description="Loss of activity." evidence="1 2">
    <original>C</original>
    <variation>S</variation>
    <location>
        <position position="78"/>
    </location>
</feature>
<feature type="mutagenesis site" description="Reduced activity." evidence="2">
    <original>C</original>
    <variation>S</variation>
    <location>
        <position position="122"/>
    </location>
</feature>
<feature type="strand" evidence="4">
    <location>
        <begin position="2"/>
        <end position="7"/>
    </location>
</feature>
<feature type="strand" evidence="4">
    <location>
        <begin position="11"/>
        <end position="15"/>
    </location>
</feature>
<feature type="helix" evidence="4">
    <location>
        <begin position="16"/>
        <end position="29"/>
    </location>
</feature>
<feature type="strand" evidence="4">
    <location>
        <begin position="33"/>
        <end position="39"/>
    </location>
</feature>
<feature type="helix" evidence="4">
    <location>
        <begin position="41"/>
        <end position="47"/>
    </location>
</feature>
<feature type="helix" evidence="4">
    <location>
        <begin position="60"/>
        <end position="71"/>
    </location>
</feature>
<feature type="strand" evidence="4">
    <location>
        <begin position="74"/>
        <end position="78"/>
    </location>
</feature>
<feature type="helix" evidence="4">
    <location>
        <begin position="79"/>
        <end position="84"/>
    </location>
</feature>
<feature type="helix" evidence="4">
    <location>
        <begin position="90"/>
        <end position="96"/>
    </location>
</feature>
<feature type="strand" evidence="4">
    <location>
        <begin position="107"/>
        <end position="110"/>
    </location>
</feature>
<feature type="helix" evidence="4">
    <location>
        <begin position="113"/>
        <end position="121"/>
    </location>
</feature>
<feature type="strand" evidence="4">
    <location>
        <begin position="122"/>
        <end position="127"/>
    </location>
</feature>
<dbReference type="EC" id="2.8.1.-"/>
<dbReference type="EMBL" id="U18997">
    <property type="protein sequence ID" value="AAA58142.1"/>
    <property type="molecule type" value="Genomic_DNA"/>
</dbReference>
<dbReference type="EMBL" id="U00096">
    <property type="protein sequence ID" value="AAC76370.1"/>
    <property type="molecule type" value="Genomic_DNA"/>
</dbReference>
<dbReference type="EMBL" id="AP009048">
    <property type="protein sequence ID" value="BAE77946.1"/>
    <property type="molecule type" value="Genomic_DNA"/>
</dbReference>
<dbReference type="PIR" id="D65128">
    <property type="entry name" value="D65128"/>
</dbReference>
<dbReference type="RefSeq" id="NP_417804.1">
    <property type="nucleotide sequence ID" value="NC_000913.3"/>
</dbReference>
<dbReference type="RefSeq" id="WP_001209680.1">
    <property type="nucleotide sequence ID" value="NZ_SSZK01000008.1"/>
</dbReference>
<dbReference type="PDB" id="2D1P">
    <property type="method" value="X-ray"/>
    <property type="resolution" value="2.15 A"/>
    <property type="chains" value="A/D/G=1-128"/>
</dbReference>
<dbReference type="PDBsum" id="2D1P"/>
<dbReference type="SMR" id="P45532"/>
<dbReference type="BioGRID" id="4262469">
    <property type="interactions" value="33"/>
</dbReference>
<dbReference type="ComplexPortal" id="CPX-2144">
    <property type="entry name" value="TusBCDE complex"/>
</dbReference>
<dbReference type="DIP" id="DIP-12310N"/>
<dbReference type="FunCoup" id="P45532">
    <property type="interactions" value="126"/>
</dbReference>
<dbReference type="IntAct" id="P45532">
    <property type="interactions" value="1"/>
</dbReference>
<dbReference type="STRING" id="511145.b3345"/>
<dbReference type="jPOST" id="P45532"/>
<dbReference type="PaxDb" id="511145-b3345"/>
<dbReference type="EnsemblBacteria" id="AAC76370">
    <property type="protein sequence ID" value="AAC76370"/>
    <property type="gene ID" value="b3345"/>
</dbReference>
<dbReference type="GeneID" id="947852"/>
<dbReference type="KEGG" id="ecj:JW3307"/>
<dbReference type="KEGG" id="eco:b3345"/>
<dbReference type="KEGG" id="ecoc:C3026_18165"/>
<dbReference type="PATRIC" id="fig|1411691.4.peg.3386"/>
<dbReference type="EchoBASE" id="EB2735"/>
<dbReference type="eggNOG" id="COG1553">
    <property type="taxonomic scope" value="Bacteria"/>
</dbReference>
<dbReference type="HOGENOM" id="CLU_132095_0_0_6"/>
<dbReference type="InParanoid" id="P45532"/>
<dbReference type="OMA" id="PYNHQAS"/>
<dbReference type="OrthoDB" id="9787483at2"/>
<dbReference type="PhylomeDB" id="P45532"/>
<dbReference type="BioCyc" id="EcoCyc:G7714-MONOMER"/>
<dbReference type="BioCyc" id="MetaCyc:G7714-MONOMER"/>
<dbReference type="EvolutionaryTrace" id="P45532"/>
<dbReference type="PRO" id="PR:P45532"/>
<dbReference type="Proteomes" id="UP000000625">
    <property type="component" value="Chromosome"/>
</dbReference>
<dbReference type="GO" id="GO:0005829">
    <property type="term" value="C:cytosol"/>
    <property type="evidence" value="ECO:0000318"/>
    <property type="project" value="GO_Central"/>
</dbReference>
<dbReference type="GO" id="GO:1990228">
    <property type="term" value="C:sulfurtransferase complex"/>
    <property type="evidence" value="ECO:0000314"/>
    <property type="project" value="EcoCyc"/>
</dbReference>
<dbReference type="GO" id="GO:0097163">
    <property type="term" value="F:sulfur carrier activity"/>
    <property type="evidence" value="ECO:0000314"/>
    <property type="project" value="EcoCyc"/>
</dbReference>
<dbReference type="GO" id="GO:0016783">
    <property type="term" value="F:sulfurtransferase activity"/>
    <property type="evidence" value="ECO:0007669"/>
    <property type="project" value="UniProtKB-UniRule"/>
</dbReference>
<dbReference type="GO" id="GO:0002143">
    <property type="term" value="P:tRNA wobble position uridine thiolation"/>
    <property type="evidence" value="ECO:0000314"/>
    <property type="project" value="ComplexPortal"/>
</dbReference>
<dbReference type="FunFam" id="3.40.1260.10:FF:000001">
    <property type="entry name" value="Sulfurtransferase TusD"/>
    <property type="match status" value="1"/>
</dbReference>
<dbReference type="Gene3D" id="3.40.1260.10">
    <property type="entry name" value="DsrEFH-like"/>
    <property type="match status" value="1"/>
</dbReference>
<dbReference type="HAMAP" id="MF_00390">
    <property type="entry name" value="Thiourid_synth_D"/>
    <property type="match status" value="1"/>
</dbReference>
<dbReference type="InterPro" id="IPR027396">
    <property type="entry name" value="DsrEFH-like"/>
</dbReference>
<dbReference type="InterPro" id="IPR003787">
    <property type="entry name" value="Sulphur_relay_DsrE/F-like"/>
</dbReference>
<dbReference type="InterPro" id="IPR017463">
    <property type="entry name" value="Sulphur_relay_TusD/DsrE"/>
</dbReference>
<dbReference type="NCBIfam" id="NF001237">
    <property type="entry name" value="PRK00207.1"/>
    <property type="match status" value="1"/>
</dbReference>
<dbReference type="NCBIfam" id="TIGR03012">
    <property type="entry name" value="sulf_tusD_dsrE"/>
    <property type="match status" value="1"/>
</dbReference>
<dbReference type="PANTHER" id="PTHR34874">
    <property type="entry name" value="PROTEIN YCHN"/>
    <property type="match status" value="1"/>
</dbReference>
<dbReference type="PANTHER" id="PTHR34874:SF3">
    <property type="entry name" value="SULFURTRANSFERASE TUSD"/>
    <property type="match status" value="1"/>
</dbReference>
<dbReference type="Pfam" id="PF02635">
    <property type="entry name" value="DsrE"/>
    <property type="match status" value="1"/>
</dbReference>
<dbReference type="SUPFAM" id="SSF75169">
    <property type="entry name" value="DsrEFH-like"/>
    <property type="match status" value="1"/>
</dbReference>
<protein>
    <recommendedName>
        <fullName>Sulfurtransferase TusD</fullName>
        <ecNumber>2.8.1.-</ecNumber>
    </recommendedName>
    <alternativeName>
        <fullName>tRNA 2-thiouridine synthesizing protein D</fullName>
    </alternativeName>
</protein>
<keyword id="KW-0002">3D-structure</keyword>
<keyword id="KW-0963">Cytoplasm</keyword>
<keyword id="KW-1185">Reference proteome</keyword>
<keyword id="KW-0808">Transferase</keyword>
<keyword id="KW-0819">tRNA processing</keyword>